<reference key="1">
    <citation type="journal article" date="2005" name="Plant Mol. Biol.">
        <title>Specific interactions between Dicer-like proteins and HYL1/DRB-family dsRNA-binding proteins in Arabidopsis thaliana.</title>
        <authorList>
            <person name="Hiraguri A."/>
            <person name="Itoh R."/>
            <person name="Kondo N."/>
            <person name="Nomura Y."/>
            <person name="Aizawa D."/>
            <person name="Murai Y."/>
            <person name="Koiwa H."/>
            <person name="Seki M."/>
            <person name="Shinozaki K."/>
            <person name="Fukuhara T."/>
        </authorList>
    </citation>
    <scope>NUCLEOTIDE SEQUENCE [MRNA] (ISOFORM 2)</scope>
    <source>
        <strain>cv. Nipponbare</strain>
    </source>
</reference>
<reference key="2">
    <citation type="journal article" date="2005" name="Nature">
        <title>The map-based sequence of the rice genome.</title>
        <authorList>
            <consortium name="International rice genome sequencing project (IRGSP)"/>
        </authorList>
    </citation>
    <scope>NUCLEOTIDE SEQUENCE [LARGE SCALE GENOMIC DNA]</scope>
    <source>
        <strain>cv. Nipponbare</strain>
    </source>
</reference>
<reference key="3">
    <citation type="journal article" date="2008" name="Nucleic Acids Res.">
        <title>The rice annotation project database (RAP-DB): 2008 update.</title>
        <authorList>
            <consortium name="The rice annotation project (RAP)"/>
        </authorList>
    </citation>
    <scope>GENOME REANNOTATION</scope>
    <source>
        <strain>cv. Nipponbare</strain>
    </source>
</reference>
<reference key="4">
    <citation type="journal article" date="2013" name="Rice">
        <title>Improvement of the Oryza sativa Nipponbare reference genome using next generation sequence and optical map data.</title>
        <authorList>
            <person name="Kawahara Y."/>
            <person name="de la Bastide M."/>
            <person name="Hamilton J.P."/>
            <person name="Kanamori H."/>
            <person name="McCombie W.R."/>
            <person name="Ouyang S."/>
            <person name="Schwartz D.C."/>
            <person name="Tanaka T."/>
            <person name="Wu J."/>
            <person name="Zhou S."/>
            <person name="Childs K.L."/>
            <person name="Davidson R.M."/>
            <person name="Lin H."/>
            <person name="Quesada-Ocampo L."/>
            <person name="Vaillancourt B."/>
            <person name="Sakai H."/>
            <person name="Lee S.S."/>
            <person name="Kim J."/>
            <person name="Numa H."/>
            <person name="Itoh T."/>
            <person name="Buell C.R."/>
            <person name="Matsumoto T."/>
        </authorList>
    </citation>
    <scope>GENOME REANNOTATION</scope>
    <source>
        <strain>cv. Nipponbare</strain>
    </source>
</reference>
<reference key="5">
    <citation type="journal article" date="2003" name="Science">
        <title>Collection, mapping, and annotation of over 28,000 cDNA clones from japonica rice.</title>
        <authorList>
            <consortium name="The rice full-length cDNA consortium"/>
        </authorList>
    </citation>
    <scope>NUCLEOTIDE SEQUENCE [LARGE SCALE MRNA] (ISOFORMS 1 AND 2)</scope>
    <source>
        <strain>cv. Nipponbare</strain>
    </source>
</reference>
<dbReference type="EMBL" id="AB114419">
    <property type="protein sequence ID" value="BAD07039.1"/>
    <property type="status" value="ALT_SEQ"/>
    <property type="molecule type" value="mRNA"/>
</dbReference>
<dbReference type="EMBL" id="AP008215">
    <property type="protein sequence ID" value="BAF25537.1"/>
    <property type="status" value="ALT_SEQ"/>
    <property type="molecule type" value="Genomic_DNA"/>
</dbReference>
<dbReference type="EMBL" id="AP014965">
    <property type="protein sequence ID" value="BAT08885.1"/>
    <property type="molecule type" value="Genomic_DNA"/>
</dbReference>
<dbReference type="EMBL" id="AP014965">
    <property type="protein sequence ID" value="BAT08886.1"/>
    <property type="molecule type" value="Genomic_DNA"/>
</dbReference>
<dbReference type="EMBL" id="AK058408">
    <property type="protein sequence ID" value="BAG86683.1"/>
    <property type="molecule type" value="mRNA"/>
</dbReference>
<dbReference type="EMBL" id="AK058662">
    <property type="protein sequence ID" value="BAG86768.1"/>
    <property type="molecule type" value="mRNA"/>
</dbReference>
<dbReference type="RefSeq" id="XP_015610736.1">
    <molecule id="B7E321-1"/>
    <property type="nucleotide sequence ID" value="XM_015755250.1"/>
</dbReference>
<dbReference type="RefSeq" id="XP_015610737.1">
    <property type="nucleotide sequence ID" value="XM_015755251.1"/>
</dbReference>
<dbReference type="SMR" id="B7E321"/>
<dbReference type="STRING" id="39947.B7E321"/>
<dbReference type="PaxDb" id="39947-B7E321"/>
<dbReference type="EnsemblPlants" id="Os09t0508500-02">
    <molecule id="B7E321-1"/>
    <property type="protein sequence ID" value="Os09t0508500-02"/>
    <property type="gene ID" value="Os09g0508500"/>
</dbReference>
<dbReference type="GeneID" id="4347527"/>
<dbReference type="Gramene" id="Os09t0508500-02">
    <molecule id="B7E321-1"/>
    <property type="protein sequence ID" value="Os09t0508500-02"/>
    <property type="gene ID" value="Os09g0508500"/>
</dbReference>
<dbReference type="KEGG" id="dosa:Os09g0508500"/>
<dbReference type="eggNOG" id="ENOG502QTBA">
    <property type="taxonomic scope" value="Eukaryota"/>
</dbReference>
<dbReference type="HOGENOM" id="CLU_038996_0_0_1"/>
<dbReference type="InParanoid" id="B7E321"/>
<dbReference type="OMA" id="VWIVCHG"/>
<dbReference type="OrthoDB" id="5988181at2759"/>
<dbReference type="Proteomes" id="UP000000763">
    <property type="component" value="Chromosome 9"/>
</dbReference>
<dbReference type="Proteomes" id="UP000059680">
    <property type="component" value="Chromosome 9"/>
</dbReference>
<dbReference type="GO" id="GO:0003725">
    <property type="term" value="F:double-stranded RNA binding"/>
    <property type="evidence" value="ECO:0007669"/>
    <property type="project" value="InterPro"/>
</dbReference>
<dbReference type="CDD" id="cd19907">
    <property type="entry name" value="DSRM_AtDRB-like_rpt1"/>
    <property type="match status" value="1"/>
</dbReference>
<dbReference type="CDD" id="cd19908">
    <property type="entry name" value="DSRM_AtDRB-like_rpt2"/>
    <property type="match status" value="1"/>
</dbReference>
<dbReference type="FunFam" id="3.30.160.20:FF:000036">
    <property type="entry name" value="Double-stranded RNA-binding protein 2"/>
    <property type="match status" value="2"/>
</dbReference>
<dbReference type="Gene3D" id="3.30.160.20">
    <property type="match status" value="2"/>
</dbReference>
<dbReference type="InterPro" id="IPR044450">
    <property type="entry name" value="AtDRB-like_DSRM_1"/>
</dbReference>
<dbReference type="InterPro" id="IPR044451">
    <property type="entry name" value="AtDRB-like_DSRM_2"/>
</dbReference>
<dbReference type="InterPro" id="IPR014720">
    <property type="entry name" value="dsRBD_dom"/>
</dbReference>
<dbReference type="PANTHER" id="PTHR46031">
    <property type="match status" value="1"/>
</dbReference>
<dbReference type="PANTHER" id="PTHR46031:SF26">
    <property type="entry name" value="DOUBLE-STRANDED RNA-BINDING PROTEIN 2"/>
    <property type="match status" value="1"/>
</dbReference>
<dbReference type="Pfam" id="PF00035">
    <property type="entry name" value="dsrm"/>
    <property type="match status" value="2"/>
</dbReference>
<dbReference type="SMART" id="SM00358">
    <property type="entry name" value="DSRM"/>
    <property type="match status" value="2"/>
</dbReference>
<dbReference type="SUPFAM" id="SSF54768">
    <property type="entry name" value="dsRNA-binding domain-like"/>
    <property type="match status" value="2"/>
</dbReference>
<dbReference type="PROSITE" id="PS50137">
    <property type="entry name" value="DS_RBD"/>
    <property type="match status" value="2"/>
</dbReference>
<evidence type="ECO:0000250" key="1"/>
<evidence type="ECO:0000255" key="2">
    <source>
        <dbReference type="PROSITE-ProRule" id="PRU00266"/>
    </source>
</evidence>
<evidence type="ECO:0000256" key="3">
    <source>
        <dbReference type="SAM" id="MobiDB-lite"/>
    </source>
</evidence>
<evidence type="ECO:0000303" key="4">
    <source>
    </source>
</evidence>
<evidence type="ECO:0000303" key="5">
    <source>
    </source>
</evidence>
<evidence type="ECO:0000305" key="6"/>
<accession>B7E321</accession>
<accession>A0A0P0XPP7</accession>
<accession>B7E2T6</accession>
<accession>Q0J0H8</accession>
<accession>Q766V3</accession>
<gene>
    <name type="primary">DRB5</name>
    <name type="synonym">DRB2</name>
    <name type="ordered locus">Os09g0508500</name>
    <name type="ordered locus">LOC_Os09g33460</name>
</gene>
<feature type="chain" id="PRO_0000404682" description="Double-stranded RNA-binding protein 5">
    <location>
        <begin position="1"/>
        <end position="404"/>
    </location>
</feature>
<feature type="domain" description="DRBM 1" evidence="2">
    <location>
        <begin position="1"/>
        <end position="70"/>
    </location>
</feature>
<feature type="domain" description="DRBM 2" evidence="2">
    <location>
        <begin position="87"/>
        <end position="155"/>
    </location>
</feature>
<feature type="region of interest" description="Disordered" evidence="3">
    <location>
        <begin position="195"/>
        <end position="236"/>
    </location>
</feature>
<feature type="region of interest" description="Disordered" evidence="3">
    <location>
        <begin position="263"/>
        <end position="320"/>
    </location>
</feature>
<feature type="region of interest" description="Disordered" evidence="3">
    <location>
        <begin position="336"/>
        <end position="362"/>
    </location>
</feature>
<feature type="compositionally biased region" description="Low complexity" evidence="3">
    <location>
        <begin position="263"/>
        <end position="280"/>
    </location>
</feature>
<feature type="compositionally biased region" description="Basic residues" evidence="3">
    <location>
        <begin position="302"/>
        <end position="316"/>
    </location>
</feature>
<feature type="splice variant" id="VSP_040618" description="In isoform 2." evidence="4 5">
    <original>SNIRTTVSPLVFDLVWIVCHGGDVFVVVWCSAGGAQGARRRRRRGAGACGRRQGARRAEAAGRLRRRRWRREGGGGVSTEEASRRRVLFVRHVAVQTSMGASVAAAAGGRTQDTASPAPAAAAASGGVRLPSRRRRAGARAEEGRRAGAHAARRHAARQGGRRNAAADAVLLRAVLPPRRRRRPDEALRRRRRVPRAAGGER</original>
    <variation>MPEARKEPGGGGGEEQEHVVVARVLAALKPRDDCGGGGGEGKAAAASLPKKHLAGASCSSATSLYRHQWGRPSPPPPAAGPKILPPLHLLQQQQAAASGSRAAAAELEQERRKAAELVHMLHAVMLRDRAADAMPPPMPCYYAPYYHHGGGVAPTRPFAGAAGFHAPPAVSVRSVIPVCAAPPSPRPPPRKEDDPATSSKRA</variation>
    <location>
        <begin position="156"/>
        <end position="357"/>
    </location>
</feature>
<feature type="splice variant" id="VSP_040619" description="In isoform 2." evidence="4 5">
    <location>
        <begin position="358"/>
        <end position="404"/>
    </location>
</feature>
<name>DRB5_ORYSJ</name>
<protein>
    <recommendedName>
        <fullName>Double-stranded RNA-binding protein 5</fullName>
    </recommendedName>
    <alternativeName>
        <fullName>dsRNA-binding protein 2</fullName>
        <shortName>OsDRB2</shortName>
    </alternativeName>
    <alternativeName>
        <fullName>dsRNA-binding protein 5</fullName>
    </alternativeName>
</protein>
<keyword id="KW-0025">Alternative splicing</keyword>
<keyword id="KW-1185">Reference proteome</keyword>
<keyword id="KW-0677">Repeat</keyword>
<keyword id="KW-0694">RNA-binding</keyword>
<proteinExistence type="evidence at transcript level"/>
<comment type="function">
    <text evidence="1">Binds double-stranded RNA.</text>
</comment>
<comment type="alternative products">
    <event type="alternative splicing"/>
    <isoform>
        <id>B7E321-1</id>
        <name>1</name>
        <sequence type="displayed"/>
    </isoform>
    <isoform>
        <id>B7E321-2</id>
        <name>2</name>
        <sequence type="described" ref="VSP_040618 VSP_040619"/>
    </isoform>
</comment>
<comment type="sequence caution" evidence="6">
    <conflict type="miscellaneous discrepancy">
        <sequence resource="EMBL-CDS" id="BAD07039"/>
    </conflict>
    <text>Sequencing errors.</text>
</comment>
<comment type="sequence caution" evidence="6">
    <conflict type="erroneous gene model prediction">
        <sequence resource="EMBL-CDS" id="BAF25537"/>
    </conflict>
</comment>
<organism>
    <name type="scientific">Oryza sativa subsp. japonica</name>
    <name type="common">Rice</name>
    <dbReference type="NCBI Taxonomy" id="39947"/>
    <lineage>
        <taxon>Eukaryota</taxon>
        <taxon>Viridiplantae</taxon>
        <taxon>Streptophyta</taxon>
        <taxon>Embryophyta</taxon>
        <taxon>Tracheophyta</taxon>
        <taxon>Spermatophyta</taxon>
        <taxon>Magnoliopsida</taxon>
        <taxon>Liliopsida</taxon>
        <taxon>Poales</taxon>
        <taxon>Poaceae</taxon>
        <taxon>BOP clade</taxon>
        <taxon>Oryzoideae</taxon>
        <taxon>Oryzeae</taxon>
        <taxon>Oryzinae</taxon>
        <taxon>Oryza</taxon>
        <taxon>Oryza sativa</taxon>
    </lineage>
</organism>
<sequence>MYKNQLQELAQRSCFSLPSYVCTREGPDHAPRFKATVTFNGETFDGPSNCTTLRQAEHAAAEVALARLSLRGPSSSLTARVLDETGVYKNLLQETAHRAGLKLPVYTTVRSGPGHSPVFSSTVELAGMSFAGDPAKTKKHAEKNAAMAAWSSLKQSNIRTTVSPLVFDLVWIVCHGGDVFVVVWCSAGGAQGARRRRRRGAGACGRRQGARRAEAAGRLRRRRWRREGGGGVSTEEASRRRVLFVRHVAVQTSMGASVAAAAGGRTQDTASPAPAAAAASGGVRLPSRRRRAGARAEEGRRAGAHAARRHAARQGGRRNAAADAVLLRAVLPPRRRRRPDEALRRRRRVPRAAGGERPFSDPGLRRATVAAAAAAQGGRSSDLIQEGVVVVKTSIQSIAQPAPI</sequence>